<organism>
    <name type="scientific">Arabidopsis thaliana</name>
    <name type="common">Mouse-ear cress</name>
    <dbReference type="NCBI Taxonomy" id="3702"/>
    <lineage>
        <taxon>Eukaryota</taxon>
        <taxon>Viridiplantae</taxon>
        <taxon>Streptophyta</taxon>
        <taxon>Embryophyta</taxon>
        <taxon>Tracheophyta</taxon>
        <taxon>Spermatophyta</taxon>
        <taxon>Magnoliopsida</taxon>
        <taxon>eudicotyledons</taxon>
        <taxon>Gunneridae</taxon>
        <taxon>Pentapetalae</taxon>
        <taxon>rosids</taxon>
        <taxon>malvids</taxon>
        <taxon>Brassicales</taxon>
        <taxon>Brassicaceae</taxon>
        <taxon>Camelineae</taxon>
        <taxon>Arabidopsis</taxon>
    </lineage>
</organism>
<gene>
    <name evidence="5" type="primary">4CLL3</name>
    <name evidence="7" type="ordered locus">At1g20490</name>
    <name evidence="8" type="ORF">F5M15.30</name>
</gene>
<proteinExistence type="evidence at transcript level"/>
<comment type="function">
    <text evidence="1">Carboxylate--CoA ligase that may use 4-coumarate as substrate. Follows a two-step reaction mechanism, wherein the carboxylate substrate first undergoes adenylation by ATP, followed by a thioesterification in the presence of CoA to yield the final CoA thioester.</text>
</comment>
<comment type="catalytic activity">
    <reaction evidence="1">
        <text>(E)-4-coumarate + ATP + CoA = (E)-4-coumaroyl-CoA + AMP + diphosphate</text>
        <dbReference type="Rhea" id="RHEA:19641"/>
        <dbReference type="ChEBI" id="CHEBI:12876"/>
        <dbReference type="ChEBI" id="CHEBI:30616"/>
        <dbReference type="ChEBI" id="CHEBI:33019"/>
        <dbReference type="ChEBI" id="CHEBI:57287"/>
        <dbReference type="ChEBI" id="CHEBI:85008"/>
        <dbReference type="ChEBI" id="CHEBI:456215"/>
        <dbReference type="EC" id="6.2.1.12"/>
    </reaction>
    <physiologicalReaction direction="left-to-right" evidence="1">
        <dbReference type="Rhea" id="RHEA:19642"/>
    </physiologicalReaction>
</comment>
<comment type="catalytic activity">
    <reaction evidence="1">
        <text>(E)-4-coumarate + ATP + H(+) = (E)-4-coumaroyl-AMP + diphosphate</text>
        <dbReference type="Rhea" id="RHEA:72419"/>
        <dbReference type="ChEBI" id="CHEBI:12876"/>
        <dbReference type="ChEBI" id="CHEBI:15378"/>
        <dbReference type="ChEBI" id="CHEBI:30616"/>
        <dbReference type="ChEBI" id="CHEBI:33019"/>
        <dbReference type="ChEBI" id="CHEBI:192348"/>
    </reaction>
    <physiologicalReaction direction="left-to-right" evidence="1">
        <dbReference type="Rhea" id="RHEA:72420"/>
    </physiologicalReaction>
</comment>
<comment type="catalytic activity">
    <reaction evidence="1">
        <text>(E)-4-coumaroyl-AMP + CoA = (E)-4-coumaroyl-CoA + AMP + H(+)</text>
        <dbReference type="Rhea" id="RHEA:72423"/>
        <dbReference type="ChEBI" id="CHEBI:15378"/>
        <dbReference type="ChEBI" id="CHEBI:57287"/>
        <dbReference type="ChEBI" id="CHEBI:85008"/>
        <dbReference type="ChEBI" id="CHEBI:192348"/>
        <dbReference type="ChEBI" id="CHEBI:456215"/>
    </reaction>
    <physiologicalReaction direction="left-to-right" evidence="1">
        <dbReference type="Rhea" id="RHEA:72424"/>
    </physiologicalReaction>
</comment>
<comment type="cofactor">
    <cofactor evidence="1">
        <name>Mg(2+)</name>
        <dbReference type="ChEBI" id="CHEBI:18420"/>
    </cofactor>
</comment>
<comment type="subcellular location">
    <subcellularLocation>
        <location evidence="6">Peroxisome</location>
    </subcellularLocation>
</comment>
<comment type="induction">
    <text evidence="4">By wounding or by jasmonic acid (JA) treatment.</text>
</comment>
<comment type="domain">
    <text evidence="2">Both substrate-binding domains (SBD1 and SBD2) are involved in the substrate recognition, and are sufficient to confer the substrate specificity.</text>
</comment>
<comment type="similarity">
    <text evidence="6">Belongs to the ATP-dependent AMP-binding enzyme family.</text>
</comment>
<comment type="sequence caution" evidence="6">
    <conflict type="erroneous gene model prediction">
        <sequence resource="EMBL-CDS" id="AAF79612"/>
    </conflict>
    <text>The predicted gene has been split into 3 genes: At1g20480, At1g20490 and At1g20500.</text>
</comment>
<comment type="sequence caution" evidence="6">
    <conflict type="frameshift">
        <sequence resource="EMBL-CDS" id="AAF79612"/>
    </conflict>
</comment>
<comment type="sequence caution" evidence="6">
    <conflict type="erroneous gene model prediction">
        <sequence resource="EMBL-CDS" id="AEE29978"/>
    </conflict>
</comment>
<comment type="sequence caution" evidence="6">
    <conflict type="frameshift">
        <sequence resource="EMBL-CDS" id="AEE29978"/>
    </conflict>
</comment>
<comment type="sequence caution" evidence="6">
    <conflict type="miscellaneous discrepancy">
        <sequence resource="EMBL" id="BX815999"/>
    </conflict>
    <text>Sequencing errors.</text>
</comment>
<name>4CLL3_ARATH</name>
<keyword id="KW-0067">ATP-binding</keyword>
<keyword id="KW-0436">Ligase</keyword>
<keyword id="KW-0460">Magnesium</keyword>
<keyword id="KW-0547">Nucleotide-binding</keyword>
<keyword id="KW-0576">Peroxisome</keyword>
<keyword id="KW-1185">Reference proteome</keyword>
<evidence type="ECO:0000250" key="1">
    <source>
        <dbReference type="UniProtKB" id="O24146"/>
    </source>
</evidence>
<evidence type="ECO:0000250" key="2">
    <source>
        <dbReference type="UniProtKB" id="Q42524"/>
    </source>
</evidence>
<evidence type="ECO:0000255" key="3"/>
<evidence type="ECO:0000269" key="4">
    <source>
    </source>
</evidence>
<evidence type="ECO:0000303" key="5">
    <source>
    </source>
</evidence>
<evidence type="ECO:0000305" key="6"/>
<evidence type="ECO:0000312" key="7">
    <source>
        <dbReference type="Araport" id="AT1G20490"/>
    </source>
</evidence>
<evidence type="ECO:0000312" key="8">
    <source>
        <dbReference type="EMBL" id="AAF79612.1"/>
    </source>
</evidence>
<dbReference type="EC" id="6.2.1.12" evidence="1"/>
<dbReference type="EMBL" id="AC027665">
    <property type="protein sequence ID" value="AAF79612.1"/>
    <property type="status" value="ALT_SEQ"/>
    <property type="molecule type" value="Genomic_DNA"/>
</dbReference>
<dbReference type="EMBL" id="CP002684">
    <property type="protein sequence ID" value="AEE29978.1"/>
    <property type="status" value="ALT_SEQ"/>
    <property type="molecule type" value="Genomic_DNA"/>
</dbReference>
<dbReference type="EMBL" id="BX815999">
    <property type="status" value="NOT_ANNOTATED_CDS"/>
    <property type="molecule type" value="mRNA"/>
</dbReference>
<dbReference type="PIR" id="D86338">
    <property type="entry name" value="D86338"/>
</dbReference>
<dbReference type="RefSeq" id="NP_001322801.1">
    <property type="nucleotide sequence ID" value="NM_001332446.1"/>
</dbReference>
<dbReference type="RefSeq" id="NP_173473.2">
    <property type="nucleotide sequence ID" value="NM_101899.4"/>
</dbReference>
<dbReference type="SMR" id="Q3E6Y4"/>
<dbReference type="BioGRID" id="23876">
    <property type="interactions" value="2"/>
</dbReference>
<dbReference type="FunCoup" id="Q3E6Y4">
    <property type="interactions" value="568"/>
</dbReference>
<dbReference type="IntAct" id="Q3E6Y4">
    <property type="interactions" value="2"/>
</dbReference>
<dbReference type="STRING" id="3702.Q3E6Y4"/>
<dbReference type="PaxDb" id="3702-AT1G20490.1"/>
<dbReference type="GeneID" id="838637"/>
<dbReference type="KEGG" id="ath:AT1G20490"/>
<dbReference type="Araport" id="AT1G20490"/>
<dbReference type="TAIR" id="AT1G20490"/>
<dbReference type="eggNOG" id="KOG1176">
    <property type="taxonomic scope" value="Eukaryota"/>
</dbReference>
<dbReference type="InParanoid" id="Q3E6Y4"/>
<dbReference type="PhylomeDB" id="Q3E6Y4"/>
<dbReference type="BioCyc" id="ARA:AT1G20490-MONOMER"/>
<dbReference type="PRO" id="PR:Q3E6Y4"/>
<dbReference type="Proteomes" id="UP000006548">
    <property type="component" value="Chromosome 1"/>
</dbReference>
<dbReference type="ExpressionAtlas" id="Q3E6Y4">
    <property type="expression patterns" value="baseline and differential"/>
</dbReference>
<dbReference type="GO" id="GO:0005777">
    <property type="term" value="C:peroxisome"/>
    <property type="evidence" value="ECO:0000318"/>
    <property type="project" value="GO_Central"/>
</dbReference>
<dbReference type="GO" id="GO:0016207">
    <property type="term" value="F:4-coumarate-CoA ligase activity"/>
    <property type="evidence" value="ECO:0007669"/>
    <property type="project" value="RHEA"/>
</dbReference>
<dbReference type="GO" id="GO:0005524">
    <property type="term" value="F:ATP binding"/>
    <property type="evidence" value="ECO:0007669"/>
    <property type="project" value="UniProtKB-KW"/>
</dbReference>
<dbReference type="GO" id="GO:0016405">
    <property type="term" value="F:CoA-ligase activity"/>
    <property type="evidence" value="ECO:0000318"/>
    <property type="project" value="GO_Central"/>
</dbReference>
<dbReference type="CDD" id="cd05904">
    <property type="entry name" value="4CL"/>
    <property type="match status" value="1"/>
</dbReference>
<dbReference type="FunFam" id="3.30.300.30:FF:000007">
    <property type="entry name" value="4-coumarate--CoA ligase 2"/>
    <property type="match status" value="1"/>
</dbReference>
<dbReference type="FunFam" id="3.40.50.12780:FF:000003">
    <property type="entry name" value="Long-chain-fatty-acid--CoA ligase FadD"/>
    <property type="match status" value="1"/>
</dbReference>
<dbReference type="Gene3D" id="3.30.300.30">
    <property type="match status" value="1"/>
</dbReference>
<dbReference type="Gene3D" id="3.40.50.12780">
    <property type="entry name" value="N-terminal domain of ligase-like"/>
    <property type="match status" value="1"/>
</dbReference>
<dbReference type="InterPro" id="IPR025110">
    <property type="entry name" value="AMP-bd_C"/>
</dbReference>
<dbReference type="InterPro" id="IPR045851">
    <property type="entry name" value="AMP-bd_C_sf"/>
</dbReference>
<dbReference type="InterPro" id="IPR020845">
    <property type="entry name" value="AMP-binding_CS"/>
</dbReference>
<dbReference type="InterPro" id="IPR000873">
    <property type="entry name" value="AMP-dep_synth/lig_dom"/>
</dbReference>
<dbReference type="InterPro" id="IPR042099">
    <property type="entry name" value="ANL_N_sf"/>
</dbReference>
<dbReference type="PANTHER" id="PTHR24096:SF339">
    <property type="entry name" value="4-COUMARATE--COA LIGASE-LIKE 3-RELATED"/>
    <property type="match status" value="1"/>
</dbReference>
<dbReference type="PANTHER" id="PTHR24096">
    <property type="entry name" value="LONG-CHAIN-FATTY-ACID--COA LIGASE"/>
    <property type="match status" value="1"/>
</dbReference>
<dbReference type="Pfam" id="PF00501">
    <property type="entry name" value="AMP-binding"/>
    <property type="match status" value="1"/>
</dbReference>
<dbReference type="Pfam" id="PF13193">
    <property type="entry name" value="AMP-binding_C"/>
    <property type="match status" value="1"/>
</dbReference>
<dbReference type="SUPFAM" id="SSF56801">
    <property type="entry name" value="Acetyl-CoA synthetase-like"/>
    <property type="match status" value="1"/>
</dbReference>
<dbReference type="PROSITE" id="PS00455">
    <property type="entry name" value="AMP_BINDING"/>
    <property type="match status" value="1"/>
</dbReference>
<accession>Q3E6Y4</accession>
<accession>F4HST6</accession>
<accession>Q9LMV7</accession>
<reference key="1">
    <citation type="journal article" date="2000" name="Nature">
        <title>Sequence and analysis of chromosome 1 of the plant Arabidopsis thaliana.</title>
        <authorList>
            <person name="Theologis A."/>
            <person name="Ecker J.R."/>
            <person name="Palm C.J."/>
            <person name="Federspiel N.A."/>
            <person name="Kaul S."/>
            <person name="White O."/>
            <person name="Alonso J."/>
            <person name="Altafi H."/>
            <person name="Araujo R."/>
            <person name="Bowman C.L."/>
            <person name="Brooks S.Y."/>
            <person name="Buehler E."/>
            <person name="Chan A."/>
            <person name="Chao Q."/>
            <person name="Chen H."/>
            <person name="Cheuk R.F."/>
            <person name="Chin C.W."/>
            <person name="Chung M.K."/>
            <person name="Conn L."/>
            <person name="Conway A.B."/>
            <person name="Conway A.R."/>
            <person name="Creasy T.H."/>
            <person name="Dewar K."/>
            <person name="Dunn P."/>
            <person name="Etgu P."/>
            <person name="Feldblyum T.V."/>
            <person name="Feng J.-D."/>
            <person name="Fong B."/>
            <person name="Fujii C.Y."/>
            <person name="Gill J.E."/>
            <person name="Goldsmith A.D."/>
            <person name="Haas B."/>
            <person name="Hansen N.F."/>
            <person name="Hughes B."/>
            <person name="Huizar L."/>
            <person name="Hunter J.L."/>
            <person name="Jenkins J."/>
            <person name="Johnson-Hopson C."/>
            <person name="Khan S."/>
            <person name="Khaykin E."/>
            <person name="Kim C.J."/>
            <person name="Koo H.L."/>
            <person name="Kremenetskaia I."/>
            <person name="Kurtz D.B."/>
            <person name="Kwan A."/>
            <person name="Lam B."/>
            <person name="Langin-Hooper S."/>
            <person name="Lee A."/>
            <person name="Lee J.M."/>
            <person name="Lenz C.A."/>
            <person name="Li J.H."/>
            <person name="Li Y.-P."/>
            <person name="Lin X."/>
            <person name="Liu S.X."/>
            <person name="Liu Z.A."/>
            <person name="Luros J.S."/>
            <person name="Maiti R."/>
            <person name="Marziali A."/>
            <person name="Militscher J."/>
            <person name="Miranda M."/>
            <person name="Nguyen M."/>
            <person name="Nierman W.C."/>
            <person name="Osborne B.I."/>
            <person name="Pai G."/>
            <person name="Peterson J."/>
            <person name="Pham P.K."/>
            <person name="Rizzo M."/>
            <person name="Rooney T."/>
            <person name="Rowley D."/>
            <person name="Sakano H."/>
            <person name="Salzberg S.L."/>
            <person name="Schwartz J.R."/>
            <person name="Shinn P."/>
            <person name="Southwick A.M."/>
            <person name="Sun H."/>
            <person name="Tallon L.J."/>
            <person name="Tambunga G."/>
            <person name="Toriumi M.J."/>
            <person name="Town C.D."/>
            <person name="Utterback T."/>
            <person name="Van Aken S."/>
            <person name="Vaysberg M."/>
            <person name="Vysotskaia V.S."/>
            <person name="Walker M."/>
            <person name="Wu D."/>
            <person name="Yu G."/>
            <person name="Fraser C.M."/>
            <person name="Venter J.C."/>
            <person name="Davis R.W."/>
        </authorList>
    </citation>
    <scope>NUCLEOTIDE SEQUENCE [LARGE SCALE GENOMIC DNA]</scope>
    <source>
        <strain>cv. Columbia</strain>
    </source>
</reference>
<reference key="2">
    <citation type="journal article" date="2017" name="Plant J.">
        <title>Araport11: a complete reannotation of the Arabidopsis thaliana reference genome.</title>
        <authorList>
            <person name="Cheng C.Y."/>
            <person name="Krishnakumar V."/>
            <person name="Chan A.P."/>
            <person name="Thibaud-Nissen F."/>
            <person name="Schobel S."/>
            <person name="Town C.D."/>
        </authorList>
    </citation>
    <scope>GENOME REANNOTATION</scope>
    <source>
        <strain>cv. Columbia</strain>
    </source>
</reference>
<reference key="3">
    <citation type="journal article" date="2004" name="Genome Res.">
        <title>Whole genome sequence comparisons and 'full-length' cDNA sequences: a combined approach to evaluate and improve Arabidopsis genome annotation.</title>
        <authorList>
            <person name="Castelli V."/>
            <person name="Aury J.-M."/>
            <person name="Jaillon O."/>
            <person name="Wincker P."/>
            <person name="Clepet C."/>
            <person name="Menard M."/>
            <person name="Cruaud C."/>
            <person name="Quetier F."/>
            <person name="Scarpelli C."/>
            <person name="Schaechter V."/>
            <person name="Temple G."/>
            <person name="Caboche M."/>
            <person name="Weissenbach J."/>
            <person name="Salanoubat M."/>
        </authorList>
    </citation>
    <scope>NUCLEOTIDE SEQUENCE [LARGE SCALE MRNA]</scope>
    <source>
        <strain>cv. Columbia</strain>
    </source>
</reference>
<reference key="4">
    <citation type="journal article" date="2003" name="Plant Physiol.">
        <title>Arabidopsis contains a large superfamily of acyl-activating enzymes. Phylogenetic and biochemical analysis reveals a new class of acyl-coenzyme a synthetases.</title>
        <authorList>
            <person name="Shockey J.M."/>
            <person name="Fulda M.S."/>
            <person name="Browse J."/>
        </authorList>
    </citation>
    <scope>GENE FAMILY ORGANIZATION</scope>
</reference>
<reference key="5">
    <citation type="journal article" date="2003" name="Proc. Natl. Acad. Sci. U.S.A.">
        <title>The substrate specificity-determining amino acid code of 4-coumarate:CoA ligase.</title>
        <authorList>
            <person name="Schneider K."/>
            <person name="Hoevel K."/>
            <person name="Witzel K."/>
            <person name="Hamberger B."/>
            <person name="Schomburg D."/>
            <person name="Kombrink E."/>
            <person name="Stuible H.-P."/>
        </authorList>
    </citation>
    <scope>GENE FAMILY ORGANIZATION</scope>
</reference>
<reference key="6">
    <citation type="journal article" date="2006" name="J. Biol. Chem.">
        <title>Identification of a peroxisomal acyl-activating enzyme involved in the biosynthesis of jasmonic acid in Arabidopsis.</title>
        <authorList>
            <person name="Koo A.J.K."/>
            <person name="Chung H.S."/>
            <person name="Kobayashi Y."/>
            <person name="Howe G.A."/>
        </authorList>
    </citation>
    <scope>INDUCTION</scope>
</reference>
<feature type="chain" id="PRO_0000299176" description="4-coumarate--CoA ligase-like 3">
    <location>
        <begin position="1"/>
        <end position="552"/>
    </location>
</feature>
<feature type="region of interest" description="SBD1" evidence="2">
    <location>
        <begin position="275"/>
        <end position="346"/>
    </location>
</feature>
<feature type="region of interest" description="SBD2" evidence="2">
    <location>
        <begin position="347"/>
        <end position="411"/>
    </location>
</feature>
<feature type="short sequence motif" description="Microbody targeting signal" evidence="3">
    <location>
        <begin position="550"/>
        <end position="552"/>
    </location>
</feature>
<feature type="binding site" evidence="1">
    <location>
        <position position="207"/>
    </location>
    <ligand>
        <name>ATP</name>
        <dbReference type="ChEBI" id="CHEBI:30616"/>
    </ligand>
</feature>
<feature type="binding site" evidence="1">
    <location>
        <position position="208"/>
    </location>
    <ligand>
        <name>ATP</name>
        <dbReference type="ChEBI" id="CHEBI:30616"/>
    </ligand>
</feature>
<feature type="binding site" evidence="1">
    <location>
        <position position="209"/>
    </location>
    <ligand>
        <name>ATP</name>
        <dbReference type="ChEBI" id="CHEBI:30616"/>
    </ligand>
</feature>
<feature type="binding site" evidence="1">
    <location>
        <position position="210"/>
    </location>
    <ligand>
        <name>ATP</name>
        <dbReference type="ChEBI" id="CHEBI:30616"/>
    </ligand>
</feature>
<feature type="binding site" evidence="1">
    <location>
        <position position="211"/>
    </location>
    <ligand>
        <name>ATP</name>
        <dbReference type="ChEBI" id="CHEBI:30616"/>
    </ligand>
</feature>
<feature type="binding site" evidence="1">
    <location>
        <position position="215"/>
    </location>
    <ligand>
        <name>ATP</name>
        <dbReference type="ChEBI" id="CHEBI:30616"/>
    </ligand>
</feature>
<feature type="binding site" evidence="1">
    <location>
        <position position="252"/>
    </location>
    <ligand>
        <name>(E)-4-coumaroyl-AMP</name>
        <dbReference type="ChEBI" id="CHEBI:192348"/>
    </ligand>
</feature>
<feature type="binding site" evidence="1">
    <location>
        <position position="273"/>
    </location>
    <ligand>
        <name>CoA</name>
        <dbReference type="ChEBI" id="CHEBI:57287"/>
    </ligand>
</feature>
<feature type="binding site" evidence="1">
    <location>
        <position position="324"/>
    </location>
    <ligand>
        <name>(E)-4-coumaroyl-AMP</name>
        <dbReference type="ChEBI" id="CHEBI:192348"/>
    </ligand>
</feature>
<feature type="binding site" evidence="1">
    <location>
        <position position="346"/>
    </location>
    <ligand>
        <name>(E)-4-coumaroyl-AMP</name>
        <dbReference type="ChEBI" id="CHEBI:192348"/>
    </ligand>
</feature>
<feature type="binding site" evidence="1">
    <location>
        <position position="346"/>
    </location>
    <ligand>
        <name>ATP</name>
        <dbReference type="ChEBI" id="CHEBI:30616"/>
    </ligand>
</feature>
<feature type="binding site" evidence="1">
    <location>
        <position position="347"/>
    </location>
    <ligand>
        <name>(E)-4-coumaroyl-AMP</name>
        <dbReference type="ChEBI" id="CHEBI:192348"/>
    </ligand>
</feature>
<feature type="binding site" evidence="1">
    <location>
        <position position="347"/>
    </location>
    <ligand>
        <name>ATP</name>
        <dbReference type="ChEBI" id="CHEBI:30616"/>
    </ligand>
</feature>
<feature type="binding site" evidence="1">
    <location>
        <position position="351"/>
    </location>
    <ligand>
        <name>(E)-4-coumaroyl-AMP</name>
        <dbReference type="ChEBI" id="CHEBI:192348"/>
    </ligand>
</feature>
<feature type="binding site" evidence="1">
    <location>
        <position position="351"/>
    </location>
    <ligand>
        <name>ATP</name>
        <dbReference type="ChEBI" id="CHEBI:30616"/>
    </ligand>
</feature>
<feature type="binding site" evidence="1">
    <location>
        <position position="432"/>
    </location>
    <ligand>
        <name>ATP</name>
        <dbReference type="ChEBI" id="CHEBI:30616"/>
    </ligand>
</feature>
<feature type="binding site" evidence="1">
    <location>
        <position position="447"/>
    </location>
    <ligand>
        <name>ATP</name>
        <dbReference type="ChEBI" id="CHEBI:30616"/>
    </ligand>
</feature>
<feature type="binding site" evidence="1">
    <location>
        <position position="449"/>
    </location>
    <ligand>
        <name>(E)-4-coumaroyl-AMP</name>
        <dbReference type="ChEBI" id="CHEBI:192348"/>
    </ligand>
</feature>
<feature type="binding site" evidence="1">
    <location>
        <position position="453"/>
    </location>
    <ligand>
        <name>(E)-4-coumaroyl-AMP</name>
        <dbReference type="ChEBI" id="CHEBI:192348"/>
    </ligand>
</feature>
<feature type="binding site" evidence="1">
    <location>
        <position position="455"/>
    </location>
    <ligand>
        <name>CoA</name>
        <dbReference type="ChEBI" id="CHEBI:57287"/>
    </ligand>
</feature>
<feature type="binding site" evidence="1">
    <location>
        <position position="456"/>
    </location>
    <ligand>
        <name>CoA</name>
        <dbReference type="ChEBI" id="CHEBI:57287"/>
    </ligand>
</feature>
<feature type="binding site" evidence="1">
    <location>
        <position position="538"/>
    </location>
    <ligand>
        <name>ATP</name>
        <dbReference type="ChEBI" id="CHEBI:30616"/>
    </ligand>
</feature>
<sequence length="552" mass="60499">MAYPERDLIVDPRSGFCKSNSTFYSKRNPLCLPPNPSLDVTTFISSQPQRGTTAFIDASTGHRLTFSDLWRVVDRVADCLYHEVGIRRGDVVLILSPNSIYIPVVCLSVMSLGAVVTTANTLNTSGEISKQIAQSNPTLVFTTSQLAPKLAAAISVVLTDEEDEKRVELTSGVRVVGILSEMMKKETSGQRVRDRVNQDDTAMMLYSSGTTGTSKGVISSHRNLTAYVAKYIDDKWKRDEIFVCTVPMFHSFGLLAFAMGSVASGSTVVILRRFGLDDMMQAVEKYKATILSLAPPVLVAMINGADQLKAKYDLTSLRKVRCGGAPLSKEVMDSFLEKYPTVNIFQGYALTESHGSGASTESVEESLKYGAVGLLSSGIEARIVDPDTGRVMGVNQPGELWLKGPSISKGYFGNEEATNETINLEGWLKLGDLCYIDEDGFLFVVDRLKELIKYKGYQVPPAELEALLIAHPHILDAAVIPFPDREAGQYPMAYVARKPESNLSEKEVIDFISNQVAPYKKIRKVAFISSIPKTASGKTLRKDLIKLSTSKL</sequence>
<protein>
    <recommendedName>
        <fullName evidence="5">4-coumarate--CoA ligase-like 3</fullName>
        <ecNumber evidence="1">6.2.1.12</ecNumber>
    </recommendedName>
</protein>